<organism>
    <name type="scientific">Archaeoglobus fulgidus (strain ATCC 49558 / DSM 4304 / JCM 9628 / NBRC 100126 / VC-16)</name>
    <dbReference type="NCBI Taxonomy" id="224325"/>
    <lineage>
        <taxon>Archaea</taxon>
        <taxon>Methanobacteriati</taxon>
        <taxon>Methanobacteriota</taxon>
        <taxon>Archaeoglobi</taxon>
        <taxon>Archaeoglobales</taxon>
        <taxon>Archaeoglobaceae</taxon>
        <taxon>Archaeoglobus</taxon>
    </lineage>
</organism>
<gene>
    <name type="ordered locus">AF_0772</name>
</gene>
<feature type="chain" id="PRO_0000127923" description="Uncharacterized protein AF_0772">
    <location>
        <begin position="1"/>
        <end position="349"/>
    </location>
</feature>
<sequence>MPVEGFITPDGVWTRGCLCMFADIDYTLNVFRGNPDEVVEQLRSAEKGRFNLLVYPLFYVDSRYSFLSSFLRLKMARNVEEASRIFKEAIYPINTLLRPFRDEKANAVSLNLFPLNFGIGKPKIAINGSNIGRSVILLTIDKNFGTKYDDFLPERGTDVEETKKILKKEFQFIEDVAISKGNLSIAKINNMSIREFLRSHNLRMRGDLENDVNREGIFGASPYILALISKETNGSTCLGLMDYNLKFYPSFFTLDIFYDEGLFLGEQLKGGLDRIKLVINSEKFDFIFVDQNIMLMFEDWIVNVFRGKDVYGVLVSFPSYTGKMQKRSMSEVEEKICLNTTLSTVFLNL</sequence>
<keyword id="KW-1185">Reference proteome</keyword>
<dbReference type="EMBL" id="AE000782">
    <property type="protein sequence ID" value="AAB90476.1"/>
    <property type="molecule type" value="Genomic_DNA"/>
</dbReference>
<dbReference type="PIR" id="D69346">
    <property type="entry name" value="D69346"/>
</dbReference>
<dbReference type="RefSeq" id="WP_010878275.1">
    <property type="nucleotide sequence ID" value="NC_000917.1"/>
</dbReference>
<dbReference type="STRING" id="224325.AF_0772"/>
<dbReference type="PaxDb" id="224325-AF_0772"/>
<dbReference type="EnsemblBacteria" id="AAB90476">
    <property type="protein sequence ID" value="AAB90476"/>
    <property type="gene ID" value="AF_0772"/>
</dbReference>
<dbReference type="GeneID" id="1483989"/>
<dbReference type="KEGG" id="afu:AF_0772"/>
<dbReference type="eggNOG" id="arCOG10223">
    <property type="taxonomic scope" value="Archaea"/>
</dbReference>
<dbReference type="HOGENOM" id="CLU_695605_0_0_2"/>
<dbReference type="OrthoDB" id="50494at2157"/>
<dbReference type="Proteomes" id="UP000002199">
    <property type="component" value="Chromosome"/>
</dbReference>
<accession>O29486</accession>
<name>Y772_ARCFU</name>
<proteinExistence type="predicted"/>
<reference key="1">
    <citation type="journal article" date="1997" name="Nature">
        <title>The complete genome sequence of the hyperthermophilic, sulphate-reducing archaeon Archaeoglobus fulgidus.</title>
        <authorList>
            <person name="Klenk H.-P."/>
            <person name="Clayton R.A."/>
            <person name="Tomb J.-F."/>
            <person name="White O."/>
            <person name="Nelson K.E."/>
            <person name="Ketchum K.A."/>
            <person name="Dodson R.J."/>
            <person name="Gwinn M.L."/>
            <person name="Hickey E.K."/>
            <person name="Peterson J.D."/>
            <person name="Richardson D.L."/>
            <person name="Kerlavage A.R."/>
            <person name="Graham D.E."/>
            <person name="Kyrpides N.C."/>
            <person name="Fleischmann R.D."/>
            <person name="Quackenbush J."/>
            <person name="Lee N.H."/>
            <person name="Sutton G.G."/>
            <person name="Gill S.R."/>
            <person name="Kirkness E.F."/>
            <person name="Dougherty B.A."/>
            <person name="McKenney K."/>
            <person name="Adams M.D."/>
            <person name="Loftus B.J."/>
            <person name="Peterson S.N."/>
            <person name="Reich C.I."/>
            <person name="McNeil L.K."/>
            <person name="Badger J.H."/>
            <person name="Glodek A."/>
            <person name="Zhou L."/>
            <person name="Overbeek R."/>
            <person name="Gocayne J.D."/>
            <person name="Weidman J.F."/>
            <person name="McDonald L.A."/>
            <person name="Utterback T.R."/>
            <person name="Cotton M.D."/>
            <person name="Spriggs T."/>
            <person name="Artiach P."/>
            <person name="Kaine B.P."/>
            <person name="Sykes S.M."/>
            <person name="Sadow P.W."/>
            <person name="D'Andrea K.P."/>
            <person name="Bowman C."/>
            <person name="Fujii C."/>
            <person name="Garland S.A."/>
            <person name="Mason T.M."/>
            <person name="Olsen G.J."/>
            <person name="Fraser C.M."/>
            <person name="Smith H.O."/>
            <person name="Woese C.R."/>
            <person name="Venter J.C."/>
        </authorList>
    </citation>
    <scope>NUCLEOTIDE SEQUENCE [LARGE SCALE GENOMIC DNA]</scope>
    <source>
        <strain>ATCC 49558 / DSM 4304 / JCM 9628 / NBRC 100126 / VC-16</strain>
    </source>
</reference>
<protein>
    <recommendedName>
        <fullName>Uncharacterized protein AF_0772</fullName>
    </recommendedName>
</protein>